<sequence>MSDEDDLEDFETDQDDLEREDDEKETEEWEDYRKEGEESEDWISTPLTEDMMKEGLSLLCKTGNGLAHAYVKLEIKDRDLTDIHLLRSYIHLRYVDVSENHLTDLSPLNHLTNLLWLKADGNQLRSARLNELPYLQIASFAYNQITDTEGISHPRLASLDLKGNRIHMVTGLDPQKLISLHTLELRGNQLNSTLGINLPKLKNLFLAQNMLKKVEGLENLSNLTTLHLRDNQIETLSGFSKEMKSLQYLNLRGNMVADLGELAKLRDLPRLRALVLLDNPCTDENDYRQEALVQIAHLERLDKEFYEEEERAEADEIRQRMKEEQEQEAEVEPESELDQSST</sequence>
<reference key="1">
    <citation type="submission" date="2005-11" db="EMBL/GenBank/DDBJ databases">
        <authorList>
            <consortium name="NIH - Mammalian Gene Collection (MGC) project"/>
        </authorList>
    </citation>
    <scope>NUCLEOTIDE SEQUENCE [LARGE SCALE MRNA]</scope>
    <source>
        <strain>Crossbred X Angus</strain>
        <tissue>Liver</tissue>
    </source>
</reference>
<accession>Q32KP2</accession>
<evidence type="ECO:0000250" key="1">
    <source>
        <dbReference type="UniProtKB" id="O35125"/>
    </source>
</evidence>
<evidence type="ECO:0000250" key="2">
    <source>
        <dbReference type="UniProtKB" id="Q53EV4"/>
    </source>
</evidence>
<evidence type="ECO:0000255" key="3"/>
<evidence type="ECO:0000256" key="4">
    <source>
        <dbReference type="SAM" id="MobiDB-lite"/>
    </source>
</evidence>
<name>LRC23_BOVIN</name>
<comment type="function">
    <text evidence="2">Essential for sperm motility and male fertility. Plays an important role in the proper assembly of the third radial spoke (RS3) head and the bridge structure between RS2 and RS3 in the sperm flagella.</text>
</comment>
<comment type="subunit">
    <text evidence="2">Component of the axonemal radial spoke complex. Interacts with RSPH3. Interacts with RSPH9.</text>
</comment>
<comment type="subcellular location">
    <subcellularLocation>
        <location evidence="1">Cytoplasm</location>
        <location evidence="1">Cytoskeleton</location>
        <location evidence="1">Flagellum axoneme</location>
    </subcellularLocation>
    <subcellularLocation>
        <location evidence="2">Cytoplasm</location>
    </subcellularLocation>
    <text evidence="1">Within the sperm flagellum, may be associated with the head of radial spoke 3.</text>
</comment>
<gene>
    <name type="primary">LRRC23</name>
</gene>
<feature type="chain" id="PRO_0000264235" description="Leucine-rich repeat-containing protein 23">
    <location>
        <begin position="1"/>
        <end position="342"/>
    </location>
</feature>
<feature type="repeat" description="LRR 1">
    <location>
        <begin position="91"/>
        <end position="112"/>
    </location>
</feature>
<feature type="repeat" description="LRR 2">
    <location>
        <begin position="113"/>
        <end position="133"/>
    </location>
</feature>
<feature type="repeat" description="LRR 3">
    <location>
        <begin position="134"/>
        <end position="154"/>
    </location>
</feature>
<feature type="repeat" description="LRR 4">
    <location>
        <begin position="155"/>
        <end position="176"/>
    </location>
</feature>
<feature type="repeat" description="LRR 5">
    <location>
        <begin position="179"/>
        <end position="199"/>
    </location>
</feature>
<feature type="repeat" description="LRR 6">
    <location>
        <begin position="200"/>
        <end position="221"/>
    </location>
</feature>
<feature type="repeat" description="LRR 7">
    <location>
        <begin position="222"/>
        <end position="243"/>
    </location>
</feature>
<feature type="repeat" description="LRR 8">
    <location>
        <begin position="245"/>
        <end position="266"/>
    </location>
</feature>
<feature type="domain" description="LRRCT">
    <location>
        <begin position="279"/>
        <end position="317"/>
    </location>
</feature>
<feature type="region of interest" description="Disordered" evidence="4">
    <location>
        <begin position="1"/>
        <end position="42"/>
    </location>
</feature>
<feature type="region of interest" description="Interaction with RSPH9" evidence="2">
    <location>
        <begin position="207"/>
        <end position="342"/>
    </location>
</feature>
<feature type="region of interest" description="Disordered" evidence="4">
    <location>
        <begin position="307"/>
        <end position="342"/>
    </location>
</feature>
<feature type="coiled-coil region" evidence="3">
    <location>
        <begin position="3"/>
        <end position="27"/>
    </location>
</feature>
<feature type="coiled-coil region" evidence="3">
    <location>
        <begin position="306"/>
        <end position="332"/>
    </location>
</feature>
<feature type="compositionally biased region" description="Acidic residues" evidence="4">
    <location>
        <begin position="1"/>
        <end position="30"/>
    </location>
</feature>
<feature type="compositionally biased region" description="Basic and acidic residues" evidence="4">
    <location>
        <begin position="314"/>
        <end position="324"/>
    </location>
</feature>
<feature type="compositionally biased region" description="Acidic residues" evidence="4">
    <location>
        <begin position="325"/>
        <end position="342"/>
    </location>
</feature>
<protein>
    <recommendedName>
        <fullName>Leucine-rich repeat-containing protein 23</fullName>
    </recommendedName>
</protein>
<dbReference type="EMBL" id="BC109993">
    <property type="protein sequence ID" value="AAI09994.1"/>
    <property type="molecule type" value="mRNA"/>
</dbReference>
<dbReference type="RefSeq" id="NP_001033288.1">
    <property type="nucleotide sequence ID" value="NM_001038199.2"/>
</dbReference>
<dbReference type="EMDB" id="EMD-50664"/>
<dbReference type="SMR" id="Q32KP2"/>
<dbReference type="FunCoup" id="Q32KP2">
    <property type="interactions" value="575"/>
</dbReference>
<dbReference type="STRING" id="9913.ENSBTAP00000014977"/>
<dbReference type="PaxDb" id="9913-ENSBTAP00000014977"/>
<dbReference type="GeneID" id="613700"/>
<dbReference type="KEGG" id="bta:613700"/>
<dbReference type="CTD" id="10233"/>
<dbReference type="eggNOG" id="KOG0531">
    <property type="taxonomic scope" value="Eukaryota"/>
</dbReference>
<dbReference type="InParanoid" id="Q32KP2"/>
<dbReference type="OrthoDB" id="271226at2759"/>
<dbReference type="Proteomes" id="UP000009136">
    <property type="component" value="Unplaced"/>
</dbReference>
<dbReference type="GO" id="GO:0005737">
    <property type="term" value="C:cytoplasm"/>
    <property type="evidence" value="ECO:0000250"/>
    <property type="project" value="UniProtKB"/>
</dbReference>
<dbReference type="GO" id="GO:0005856">
    <property type="term" value="C:cytoskeleton"/>
    <property type="evidence" value="ECO:0007669"/>
    <property type="project" value="UniProtKB-KW"/>
</dbReference>
<dbReference type="GO" id="GO:0031514">
    <property type="term" value="C:motile cilium"/>
    <property type="evidence" value="ECO:0007669"/>
    <property type="project" value="UniProtKB-KW"/>
</dbReference>
<dbReference type="FunFam" id="3.80.10.10:FF:000310">
    <property type="entry name" value="leucine-rich repeat-containing protein 23"/>
    <property type="match status" value="1"/>
</dbReference>
<dbReference type="FunFam" id="3.80.10.10:FF:000366">
    <property type="entry name" value="leucine-rich repeat-containing protein 23"/>
    <property type="match status" value="1"/>
</dbReference>
<dbReference type="Gene3D" id="3.80.10.10">
    <property type="entry name" value="Ribonuclease Inhibitor"/>
    <property type="match status" value="2"/>
</dbReference>
<dbReference type="InterPro" id="IPR001611">
    <property type="entry name" value="Leu-rich_rpt"/>
</dbReference>
<dbReference type="InterPro" id="IPR032675">
    <property type="entry name" value="LRR_dom_sf"/>
</dbReference>
<dbReference type="InterPro" id="IPR050836">
    <property type="entry name" value="SDS22/Internalin_LRR"/>
</dbReference>
<dbReference type="PANTHER" id="PTHR46652:SF8">
    <property type="entry name" value="LEUCINE RICH REPEAT CONTAINING 23"/>
    <property type="match status" value="1"/>
</dbReference>
<dbReference type="PANTHER" id="PTHR46652">
    <property type="entry name" value="LEUCINE-RICH REPEAT AND IQ DOMAIN-CONTAINING PROTEIN 1-RELATED"/>
    <property type="match status" value="1"/>
</dbReference>
<dbReference type="Pfam" id="PF14580">
    <property type="entry name" value="LRR_9"/>
    <property type="match status" value="1"/>
</dbReference>
<dbReference type="SMART" id="SM00365">
    <property type="entry name" value="LRR_SD22"/>
    <property type="match status" value="3"/>
</dbReference>
<dbReference type="SUPFAM" id="SSF52058">
    <property type="entry name" value="L domain-like"/>
    <property type="match status" value="1"/>
</dbReference>
<dbReference type="PROSITE" id="PS51450">
    <property type="entry name" value="LRR"/>
    <property type="match status" value="8"/>
</dbReference>
<organism>
    <name type="scientific">Bos taurus</name>
    <name type="common">Bovine</name>
    <dbReference type="NCBI Taxonomy" id="9913"/>
    <lineage>
        <taxon>Eukaryota</taxon>
        <taxon>Metazoa</taxon>
        <taxon>Chordata</taxon>
        <taxon>Craniata</taxon>
        <taxon>Vertebrata</taxon>
        <taxon>Euteleostomi</taxon>
        <taxon>Mammalia</taxon>
        <taxon>Eutheria</taxon>
        <taxon>Laurasiatheria</taxon>
        <taxon>Artiodactyla</taxon>
        <taxon>Ruminantia</taxon>
        <taxon>Pecora</taxon>
        <taxon>Bovidae</taxon>
        <taxon>Bovinae</taxon>
        <taxon>Bos</taxon>
    </lineage>
</organism>
<proteinExistence type="evidence at transcript level"/>
<keyword id="KW-0966">Cell projection</keyword>
<keyword id="KW-0969">Cilium</keyword>
<keyword id="KW-0175">Coiled coil</keyword>
<keyword id="KW-0963">Cytoplasm</keyword>
<keyword id="KW-0206">Cytoskeleton</keyword>
<keyword id="KW-0282">Flagellum</keyword>
<keyword id="KW-0433">Leucine-rich repeat</keyword>
<keyword id="KW-1185">Reference proteome</keyword>
<keyword id="KW-0677">Repeat</keyword>